<dbReference type="EMBL" id="CR954246">
    <property type="protein sequence ID" value="CAI86297.1"/>
    <property type="molecule type" value="Genomic_DNA"/>
</dbReference>
<dbReference type="SMR" id="Q3IKR2"/>
<dbReference type="STRING" id="326442.PSHAa1222"/>
<dbReference type="KEGG" id="pha:PSHAa1222"/>
<dbReference type="PATRIC" id="fig|326442.8.peg.1176"/>
<dbReference type="eggNOG" id="COG0576">
    <property type="taxonomic scope" value="Bacteria"/>
</dbReference>
<dbReference type="HOGENOM" id="CLU_057217_6_0_6"/>
<dbReference type="BioCyc" id="PHAL326442:PSHA_RS06030-MONOMER"/>
<dbReference type="Proteomes" id="UP000006843">
    <property type="component" value="Chromosome I"/>
</dbReference>
<dbReference type="GO" id="GO:0005829">
    <property type="term" value="C:cytosol"/>
    <property type="evidence" value="ECO:0007669"/>
    <property type="project" value="TreeGrafter"/>
</dbReference>
<dbReference type="GO" id="GO:0000774">
    <property type="term" value="F:adenyl-nucleotide exchange factor activity"/>
    <property type="evidence" value="ECO:0007669"/>
    <property type="project" value="InterPro"/>
</dbReference>
<dbReference type="GO" id="GO:0042803">
    <property type="term" value="F:protein homodimerization activity"/>
    <property type="evidence" value="ECO:0007669"/>
    <property type="project" value="InterPro"/>
</dbReference>
<dbReference type="GO" id="GO:0051087">
    <property type="term" value="F:protein-folding chaperone binding"/>
    <property type="evidence" value="ECO:0007669"/>
    <property type="project" value="InterPro"/>
</dbReference>
<dbReference type="GO" id="GO:0051082">
    <property type="term" value="F:unfolded protein binding"/>
    <property type="evidence" value="ECO:0007669"/>
    <property type="project" value="TreeGrafter"/>
</dbReference>
<dbReference type="GO" id="GO:0006457">
    <property type="term" value="P:protein folding"/>
    <property type="evidence" value="ECO:0007669"/>
    <property type="project" value="InterPro"/>
</dbReference>
<dbReference type="CDD" id="cd00446">
    <property type="entry name" value="GrpE"/>
    <property type="match status" value="1"/>
</dbReference>
<dbReference type="FunFam" id="2.30.22.10:FF:000001">
    <property type="entry name" value="Protein GrpE"/>
    <property type="match status" value="1"/>
</dbReference>
<dbReference type="Gene3D" id="3.90.20.20">
    <property type="match status" value="1"/>
</dbReference>
<dbReference type="Gene3D" id="2.30.22.10">
    <property type="entry name" value="Head domain of nucleotide exchange factor GrpE"/>
    <property type="match status" value="1"/>
</dbReference>
<dbReference type="HAMAP" id="MF_01151">
    <property type="entry name" value="GrpE"/>
    <property type="match status" value="1"/>
</dbReference>
<dbReference type="InterPro" id="IPR000740">
    <property type="entry name" value="GrpE"/>
</dbReference>
<dbReference type="InterPro" id="IPR013805">
    <property type="entry name" value="GrpE_coiled_coil"/>
</dbReference>
<dbReference type="InterPro" id="IPR009012">
    <property type="entry name" value="GrpE_head"/>
</dbReference>
<dbReference type="NCBIfam" id="NF010737">
    <property type="entry name" value="PRK14139.1"/>
    <property type="match status" value="1"/>
</dbReference>
<dbReference type="NCBIfam" id="NF010738">
    <property type="entry name" value="PRK14140.1"/>
    <property type="match status" value="1"/>
</dbReference>
<dbReference type="NCBIfam" id="NF010748">
    <property type="entry name" value="PRK14150.1"/>
    <property type="match status" value="1"/>
</dbReference>
<dbReference type="PANTHER" id="PTHR21237">
    <property type="entry name" value="GRPE PROTEIN"/>
    <property type="match status" value="1"/>
</dbReference>
<dbReference type="PANTHER" id="PTHR21237:SF23">
    <property type="entry name" value="GRPE PROTEIN HOMOLOG, MITOCHONDRIAL"/>
    <property type="match status" value="1"/>
</dbReference>
<dbReference type="Pfam" id="PF01025">
    <property type="entry name" value="GrpE"/>
    <property type="match status" value="1"/>
</dbReference>
<dbReference type="PRINTS" id="PR00773">
    <property type="entry name" value="GRPEPROTEIN"/>
</dbReference>
<dbReference type="SUPFAM" id="SSF58014">
    <property type="entry name" value="Coiled-coil domain of nucleotide exchange factor GrpE"/>
    <property type="match status" value="1"/>
</dbReference>
<dbReference type="SUPFAM" id="SSF51064">
    <property type="entry name" value="Head domain of nucleotide exchange factor GrpE"/>
    <property type="match status" value="1"/>
</dbReference>
<dbReference type="PROSITE" id="PS01071">
    <property type="entry name" value="GRPE"/>
    <property type="match status" value="1"/>
</dbReference>
<comment type="function">
    <text evidence="1">Participates actively in the response to hyperosmotic and heat shock by preventing the aggregation of stress-denatured proteins, in association with DnaK and GrpE. It is the nucleotide exchange factor for DnaK and may function as a thermosensor. Unfolded proteins bind initially to DnaJ; upon interaction with the DnaJ-bound protein, DnaK hydrolyzes its bound ATP, resulting in the formation of a stable complex. GrpE releases ADP from DnaK; ATP binding to DnaK triggers the release of the substrate protein, thus completing the reaction cycle. Several rounds of ATP-dependent interactions between DnaJ, DnaK and GrpE are required for fully efficient folding.</text>
</comment>
<comment type="subunit">
    <text evidence="1">Homodimer.</text>
</comment>
<comment type="subcellular location">
    <subcellularLocation>
        <location evidence="1">Cytoplasm</location>
    </subcellularLocation>
</comment>
<comment type="similarity">
    <text evidence="1">Belongs to the GrpE family.</text>
</comment>
<sequence>MSEQRQNPEQEVELNEDLAKMEADVEAAVQAAEEHAEQEQSPEAEIAMLYAELEVAKQTIADQKDGVVRAAADVENMRRRAAQDVEKAHKFALEKFANELLPVIDNLERAIEFSDKENETLKPVLEGISMTVKSFNDAVAKFGVEIVNPQGEQFNPEFHQAMSIQPSNDVSPNTVLAVMQKGYTLNGRLLRPAMVMVSKAADA</sequence>
<accession>Q3IKR2</accession>
<keyword id="KW-0143">Chaperone</keyword>
<keyword id="KW-0963">Cytoplasm</keyword>
<keyword id="KW-1185">Reference proteome</keyword>
<keyword id="KW-0346">Stress response</keyword>
<proteinExistence type="inferred from homology"/>
<feature type="chain" id="PRO_1000053623" description="Protein GrpE">
    <location>
        <begin position="1"/>
        <end position="203"/>
    </location>
</feature>
<name>GRPE_PSET1</name>
<protein>
    <recommendedName>
        <fullName evidence="1">Protein GrpE</fullName>
    </recommendedName>
    <alternativeName>
        <fullName evidence="1">HSP-70 cofactor</fullName>
    </alternativeName>
</protein>
<reference key="1">
    <citation type="journal article" date="2005" name="Genome Res.">
        <title>Coping with cold: the genome of the versatile marine Antarctica bacterium Pseudoalteromonas haloplanktis TAC125.</title>
        <authorList>
            <person name="Medigue C."/>
            <person name="Krin E."/>
            <person name="Pascal G."/>
            <person name="Barbe V."/>
            <person name="Bernsel A."/>
            <person name="Bertin P.N."/>
            <person name="Cheung F."/>
            <person name="Cruveiller S."/>
            <person name="D'Amico S."/>
            <person name="Duilio A."/>
            <person name="Fang G."/>
            <person name="Feller G."/>
            <person name="Ho C."/>
            <person name="Mangenot S."/>
            <person name="Marino G."/>
            <person name="Nilsson J."/>
            <person name="Parrilli E."/>
            <person name="Rocha E.P.C."/>
            <person name="Rouy Z."/>
            <person name="Sekowska A."/>
            <person name="Tutino M.L."/>
            <person name="Vallenet D."/>
            <person name="von Heijne G."/>
            <person name="Danchin A."/>
        </authorList>
    </citation>
    <scope>NUCLEOTIDE SEQUENCE [LARGE SCALE GENOMIC DNA]</scope>
    <source>
        <strain>TAC 125</strain>
    </source>
</reference>
<gene>
    <name evidence="1" type="primary">grpE</name>
    <name type="ordered locus">PSHAa1222</name>
</gene>
<evidence type="ECO:0000255" key="1">
    <source>
        <dbReference type="HAMAP-Rule" id="MF_01151"/>
    </source>
</evidence>
<organism>
    <name type="scientific">Pseudoalteromonas translucida (strain TAC 125)</name>
    <dbReference type="NCBI Taxonomy" id="326442"/>
    <lineage>
        <taxon>Bacteria</taxon>
        <taxon>Pseudomonadati</taxon>
        <taxon>Pseudomonadota</taxon>
        <taxon>Gammaproteobacteria</taxon>
        <taxon>Alteromonadales</taxon>
        <taxon>Pseudoalteromonadaceae</taxon>
        <taxon>Pseudoalteromonas</taxon>
    </lineage>
</organism>